<organism>
    <name type="scientific">Helicobacter pylori (strain HPAG1)</name>
    <dbReference type="NCBI Taxonomy" id="357544"/>
    <lineage>
        <taxon>Bacteria</taxon>
        <taxon>Pseudomonadati</taxon>
        <taxon>Campylobacterota</taxon>
        <taxon>Epsilonproteobacteria</taxon>
        <taxon>Campylobacterales</taxon>
        <taxon>Helicobacteraceae</taxon>
        <taxon>Helicobacter</taxon>
    </lineage>
</organism>
<dbReference type="EC" id="3.1.3.5" evidence="1"/>
<dbReference type="EMBL" id="CP000241">
    <property type="protein sequence ID" value="ABF84978.1"/>
    <property type="molecule type" value="Genomic_DNA"/>
</dbReference>
<dbReference type="RefSeq" id="WP_000722453.1">
    <property type="nucleotide sequence ID" value="NC_008086.1"/>
</dbReference>
<dbReference type="SMR" id="Q1CSU4"/>
<dbReference type="KEGG" id="hpa:HPAG1_0911"/>
<dbReference type="HOGENOM" id="CLU_045192_1_3_7"/>
<dbReference type="GO" id="GO:0005737">
    <property type="term" value="C:cytoplasm"/>
    <property type="evidence" value="ECO:0007669"/>
    <property type="project" value="UniProtKB-SubCell"/>
</dbReference>
<dbReference type="GO" id="GO:0008254">
    <property type="term" value="F:3'-nucleotidase activity"/>
    <property type="evidence" value="ECO:0007669"/>
    <property type="project" value="TreeGrafter"/>
</dbReference>
<dbReference type="GO" id="GO:0008253">
    <property type="term" value="F:5'-nucleotidase activity"/>
    <property type="evidence" value="ECO:0007669"/>
    <property type="project" value="UniProtKB-UniRule"/>
</dbReference>
<dbReference type="GO" id="GO:0004309">
    <property type="term" value="F:exopolyphosphatase activity"/>
    <property type="evidence" value="ECO:0007669"/>
    <property type="project" value="TreeGrafter"/>
</dbReference>
<dbReference type="GO" id="GO:0046872">
    <property type="term" value="F:metal ion binding"/>
    <property type="evidence" value="ECO:0007669"/>
    <property type="project" value="UniProtKB-UniRule"/>
</dbReference>
<dbReference type="GO" id="GO:0000166">
    <property type="term" value="F:nucleotide binding"/>
    <property type="evidence" value="ECO:0007669"/>
    <property type="project" value="UniProtKB-KW"/>
</dbReference>
<dbReference type="FunFam" id="3.40.1210.10:FF:000001">
    <property type="entry name" value="5'/3'-nucleotidase SurE"/>
    <property type="match status" value="1"/>
</dbReference>
<dbReference type="Gene3D" id="3.40.1210.10">
    <property type="entry name" value="Survival protein SurE-like phosphatase/nucleotidase"/>
    <property type="match status" value="1"/>
</dbReference>
<dbReference type="HAMAP" id="MF_00060">
    <property type="entry name" value="SurE"/>
    <property type="match status" value="1"/>
</dbReference>
<dbReference type="InterPro" id="IPR030048">
    <property type="entry name" value="SurE"/>
</dbReference>
<dbReference type="InterPro" id="IPR002828">
    <property type="entry name" value="SurE-like_Pase/nucleotidase"/>
</dbReference>
<dbReference type="InterPro" id="IPR036523">
    <property type="entry name" value="SurE-like_sf"/>
</dbReference>
<dbReference type="NCBIfam" id="NF001490">
    <property type="entry name" value="PRK00346.1-4"/>
    <property type="match status" value="1"/>
</dbReference>
<dbReference type="NCBIfam" id="NF001494">
    <property type="entry name" value="PRK00346.2-4"/>
    <property type="match status" value="1"/>
</dbReference>
<dbReference type="NCBIfam" id="TIGR00087">
    <property type="entry name" value="surE"/>
    <property type="match status" value="1"/>
</dbReference>
<dbReference type="PANTHER" id="PTHR30457">
    <property type="entry name" value="5'-NUCLEOTIDASE SURE"/>
    <property type="match status" value="1"/>
</dbReference>
<dbReference type="PANTHER" id="PTHR30457:SF12">
    <property type="entry name" value="5'_3'-NUCLEOTIDASE SURE"/>
    <property type="match status" value="1"/>
</dbReference>
<dbReference type="Pfam" id="PF01975">
    <property type="entry name" value="SurE"/>
    <property type="match status" value="1"/>
</dbReference>
<dbReference type="SUPFAM" id="SSF64167">
    <property type="entry name" value="SurE-like"/>
    <property type="match status" value="1"/>
</dbReference>
<sequence length="267" mass="30052">MKKILLTNDDGYHAKGIKALEQALEEMAEIYVVAPKHEKSACSQCITITAPLRAEKIKGKEGRHYRIDDGTPSDCVYLAINELFKHVCFDLVISGINLGSNMGEDTIYSGTVAGAIEGTIQGVPSIAISQILSNKNKNTPLSFDLAQKIIQDLVQNIFTKGYPLKGRKLLNVNVPNCSLQEYQGERITPKGYRLYKKEVHKRTDPKNESYFWLGLHPLEWQKRENEDRLSDFDAIASNHVSITPLNLDLTSYDDLKSLESWHEGMLK</sequence>
<name>SURE_HELPH</name>
<proteinExistence type="inferred from homology"/>
<keyword id="KW-0963">Cytoplasm</keyword>
<keyword id="KW-0378">Hydrolase</keyword>
<keyword id="KW-0479">Metal-binding</keyword>
<keyword id="KW-0547">Nucleotide-binding</keyword>
<accession>Q1CSU4</accession>
<protein>
    <recommendedName>
        <fullName evidence="1">5'-nucleotidase SurE</fullName>
        <ecNumber evidence="1">3.1.3.5</ecNumber>
    </recommendedName>
    <alternativeName>
        <fullName evidence="1">Nucleoside 5'-monophosphate phosphohydrolase</fullName>
    </alternativeName>
</protein>
<feature type="chain" id="PRO_1000007738" description="5'-nucleotidase SurE">
    <location>
        <begin position="1"/>
        <end position="267"/>
    </location>
</feature>
<feature type="binding site" evidence="1">
    <location>
        <position position="9"/>
    </location>
    <ligand>
        <name>a divalent metal cation</name>
        <dbReference type="ChEBI" id="CHEBI:60240"/>
    </ligand>
</feature>
<feature type="binding site" evidence="1">
    <location>
        <position position="10"/>
    </location>
    <ligand>
        <name>a divalent metal cation</name>
        <dbReference type="ChEBI" id="CHEBI:60240"/>
    </ligand>
</feature>
<feature type="binding site" evidence="1">
    <location>
        <position position="40"/>
    </location>
    <ligand>
        <name>a divalent metal cation</name>
        <dbReference type="ChEBI" id="CHEBI:60240"/>
    </ligand>
</feature>
<feature type="binding site" evidence="1">
    <location>
        <position position="97"/>
    </location>
    <ligand>
        <name>a divalent metal cation</name>
        <dbReference type="ChEBI" id="CHEBI:60240"/>
    </ligand>
</feature>
<comment type="function">
    <text evidence="1">Nucleotidase that shows phosphatase activity on nucleoside 5'-monophosphates.</text>
</comment>
<comment type="catalytic activity">
    <reaction evidence="1">
        <text>a ribonucleoside 5'-phosphate + H2O = a ribonucleoside + phosphate</text>
        <dbReference type="Rhea" id="RHEA:12484"/>
        <dbReference type="ChEBI" id="CHEBI:15377"/>
        <dbReference type="ChEBI" id="CHEBI:18254"/>
        <dbReference type="ChEBI" id="CHEBI:43474"/>
        <dbReference type="ChEBI" id="CHEBI:58043"/>
        <dbReference type="EC" id="3.1.3.5"/>
    </reaction>
</comment>
<comment type="cofactor">
    <cofactor evidence="1">
        <name>a divalent metal cation</name>
        <dbReference type="ChEBI" id="CHEBI:60240"/>
    </cofactor>
    <text evidence="1">Binds 1 divalent metal cation per subunit.</text>
</comment>
<comment type="subcellular location">
    <subcellularLocation>
        <location evidence="1">Cytoplasm</location>
    </subcellularLocation>
</comment>
<comment type="similarity">
    <text evidence="1">Belongs to the SurE nucleotidase family.</text>
</comment>
<reference key="1">
    <citation type="journal article" date="2006" name="Proc. Natl. Acad. Sci. U.S.A.">
        <title>The complete genome sequence of a chronic atrophic gastritis Helicobacter pylori strain: evolution during disease progression.</title>
        <authorList>
            <person name="Oh J.D."/>
            <person name="Kling-Baeckhed H."/>
            <person name="Giannakis M."/>
            <person name="Xu J."/>
            <person name="Fulton R.S."/>
            <person name="Fulton L.A."/>
            <person name="Cordum H.S."/>
            <person name="Wang C."/>
            <person name="Elliott G."/>
            <person name="Edwards J."/>
            <person name="Mardis E.R."/>
            <person name="Engstrand L.G."/>
            <person name="Gordon J.I."/>
        </authorList>
    </citation>
    <scope>NUCLEOTIDE SEQUENCE [LARGE SCALE GENOMIC DNA]</scope>
    <source>
        <strain>HPAG1</strain>
    </source>
</reference>
<evidence type="ECO:0000255" key="1">
    <source>
        <dbReference type="HAMAP-Rule" id="MF_00060"/>
    </source>
</evidence>
<gene>
    <name evidence="1" type="primary">surE</name>
    <name type="ordered locus">HPAG1_0911</name>
</gene>